<reference evidence="5" key="1">
    <citation type="journal article" date="2003" name="Glycobiology">
        <title>Amino acid sequence and tertiary structure of Cratylia mollis seed lectin.</title>
        <authorList>
            <person name="De Souza G.A."/>
            <person name="Oliveira P.S.L."/>
            <person name="Trapani S."/>
            <person name="Santos A.C.O."/>
            <person name="Rosa J.C."/>
            <person name="Laure H.J."/>
            <person name="Faca V.M."/>
            <person name="Correia M.T.S."/>
            <person name="Tavares G.A."/>
            <person name="Oliva G."/>
            <person name="Coelho L.C.B.B."/>
            <person name="Greene L.J."/>
        </authorList>
    </citation>
    <scope>PROTEIN SEQUENCE</scope>
    <scope>SUBUNIT</scope>
    <scope>METAL-BINDING</scope>
    <scope>X-RAY CRYSTALLOGRAPHY (1.77 ANGSTROMS)</scope>
    <source>
        <tissue evidence="2">Seed</tissue>
    </source>
</reference>
<reference evidence="5" key="2">
    <citation type="journal article" date="1995" name="Appl. Biochem. Biotechnol.">
        <title>Purification of a glucose/mannose specific lectin, isoform 1, from seeds of Cratylia mollis Mart. (Camaratu bean).</title>
        <authorList>
            <person name="Correia M.T.S."/>
            <person name="Coelho L.C.B.B."/>
        </authorList>
    </citation>
    <scope>FUNCTION</scope>
</reference>
<protein>
    <recommendedName>
        <fullName>Mannose/glucose-specific lectin Cramoll</fullName>
    </recommendedName>
    <alternativeName>
        <fullName>Iso1</fullName>
    </alternativeName>
    <component>
        <recommendedName>
            <fullName>Cramoll alpha chain</fullName>
        </recommendedName>
    </component>
    <component>
        <recommendedName>
            <fullName>Cramoll beta chain</fullName>
        </recommendedName>
    </component>
</protein>
<comment type="function">
    <text evidence="3">Glucose/D-mannose specific lectin.</text>
</comment>
<comment type="subunit">
    <text evidence="2">Homotetramer.</text>
</comment>
<comment type="PTM">
    <text evidence="4">The alpha and beta chains are produced by partial proteolytic processing of the lectin precursor by an asparaginyl endopeptidase.</text>
</comment>
<comment type="miscellaneous">
    <text>Binds one manganese (or another transition metal) ion and one calcium ion. The metal ions are essential for the saccharide-binding and cell-agglutinating activities.</text>
</comment>
<comment type="similarity">
    <text evidence="5">Belongs to the leguminous lectin family.</text>
</comment>
<proteinExistence type="evidence at protein level"/>
<keyword id="KW-0002">3D-structure</keyword>
<keyword id="KW-0106">Calcium</keyword>
<keyword id="KW-0903">Direct protein sequencing</keyword>
<keyword id="KW-0430">Lectin</keyword>
<keyword id="KW-0464">Manganese</keyword>
<keyword id="KW-0465">Mannose-binding</keyword>
<keyword id="KW-0479">Metal-binding</keyword>
<sequence>ADTIVAVELDTYPNTDIGDPSYQHIGINIKSIRSKATTRWDVQNGKVGTAHISYNSVAKRLSAVVSYPGGSSATVSYDVDLNNILPEWVRVGLSASTGLYKETNTILSWSFTSKSNSTADAQSLHFTFNQFSQSPKDLILQGDASTDSDGNLQLTRVSNGSPQSDSVGRALYYAPVHIWDKSAVVASFDATFTFLIKSPDREIADGIAFFIANTDSSIPHGSGGRLLGLFPDAN</sequence>
<name>LEC1_CRAMO</name>
<feature type="chain" id="PRO_0000017591" description="Cramoll alpha chain" evidence="1">
    <location>
        <begin position="1"/>
        <end position="116"/>
    </location>
</feature>
<feature type="chain" id="PRO_0000017592" description="Cramoll beta chain" evidence="1">
    <location>
        <begin position="117"/>
        <end position="234"/>
    </location>
</feature>
<feature type="binding site">
    <location>
        <position position="8"/>
    </location>
    <ligand>
        <name>Mn(2+)</name>
        <dbReference type="ChEBI" id="CHEBI:29035"/>
    </ligand>
</feature>
<feature type="binding site">
    <location>
        <position position="10"/>
    </location>
    <ligand>
        <name>Ca(2+)</name>
        <dbReference type="ChEBI" id="CHEBI:29108"/>
    </ligand>
</feature>
<feature type="binding site">
    <location>
        <position position="10"/>
    </location>
    <ligand>
        <name>Mn(2+)</name>
        <dbReference type="ChEBI" id="CHEBI:29035"/>
    </ligand>
</feature>
<feature type="binding site" evidence="1">
    <location>
        <position position="12"/>
    </location>
    <ligand>
        <name>a carbohydrate</name>
        <dbReference type="ChEBI" id="CHEBI:16646"/>
    </ligand>
</feature>
<feature type="binding site">
    <location>
        <position position="12"/>
    </location>
    <ligand>
        <name>Ca(2+)</name>
        <dbReference type="ChEBI" id="CHEBI:29108"/>
    </ligand>
</feature>
<feature type="binding site">
    <location>
        <position position="14"/>
    </location>
    <ligand>
        <name>Ca(2+)</name>
        <dbReference type="ChEBI" id="CHEBI:29108"/>
    </ligand>
</feature>
<feature type="binding site">
    <location>
        <position position="19"/>
    </location>
    <ligand>
        <name>Ca(2+)</name>
        <dbReference type="ChEBI" id="CHEBI:29108"/>
    </ligand>
</feature>
<feature type="binding site">
    <location>
        <position position="19"/>
    </location>
    <ligand>
        <name>Mn(2+)</name>
        <dbReference type="ChEBI" id="CHEBI:29035"/>
    </ligand>
</feature>
<feature type="binding site">
    <location>
        <position position="24"/>
    </location>
    <ligand>
        <name>Mn(2+)</name>
        <dbReference type="ChEBI" id="CHEBI:29035"/>
    </ligand>
</feature>
<feature type="binding site">
    <location>
        <position position="34"/>
    </location>
    <ligand>
        <name>Mn(2+)</name>
        <dbReference type="ChEBI" id="CHEBI:29035"/>
    </ligand>
</feature>
<feature type="binding site" evidence="1">
    <location>
        <begin position="99"/>
        <end position="100"/>
    </location>
    <ligand>
        <name>a carbohydrate</name>
        <dbReference type="ChEBI" id="CHEBI:16646"/>
    </ligand>
</feature>
<feature type="binding site">
    <location>
        <position position="205"/>
    </location>
    <ligand>
        <name>Ca(2+)</name>
        <dbReference type="ChEBI" id="CHEBI:29108"/>
    </ligand>
</feature>
<feature type="binding site" evidence="1">
    <location>
        <position position="225"/>
    </location>
    <ligand>
        <name>a carbohydrate</name>
        <dbReference type="ChEBI" id="CHEBI:16646"/>
    </ligand>
</feature>
<feature type="non-consecutive residues" evidence="4">
    <location>
        <begin position="114"/>
        <end position="115"/>
    </location>
</feature>
<feature type="strand" evidence="6">
    <location>
        <begin position="4"/>
        <end position="10"/>
    </location>
</feature>
<feature type="helix" evidence="6">
    <location>
        <begin position="15"/>
        <end position="17"/>
    </location>
</feature>
<feature type="strand" evidence="6">
    <location>
        <begin position="24"/>
        <end position="33"/>
    </location>
</feature>
<feature type="strand" evidence="6">
    <location>
        <begin position="35"/>
        <end position="39"/>
    </location>
</feature>
<feature type="strand" evidence="6">
    <location>
        <begin position="47"/>
        <end position="55"/>
    </location>
</feature>
<feature type="turn" evidence="6">
    <location>
        <begin position="56"/>
        <end position="59"/>
    </location>
</feature>
<feature type="strand" evidence="6">
    <location>
        <begin position="60"/>
        <end position="67"/>
    </location>
</feature>
<feature type="turn" evidence="6">
    <location>
        <begin position="68"/>
        <end position="70"/>
    </location>
</feature>
<feature type="strand" evidence="6">
    <location>
        <begin position="71"/>
        <end position="78"/>
    </location>
</feature>
<feature type="helix" evidence="6">
    <location>
        <begin position="81"/>
        <end position="83"/>
    </location>
</feature>
<feature type="strand" evidence="6">
    <location>
        <begin position="87"/>
        <end position="96"/>
    </location>
</feature>
<feature type="strand" evidence="6">
    <location>
        <begin position="98"/>
        <end position="100"/>
    </location>
</feature>
<feature type="strand" evidence="6">
    <location>
        <begin position="105"/>
        <end position="114"/>
    </location>
</feature>
<feature type="strand" evidence="6">
    <location>
        <begin position="116"/>
        <end position="119"/>
    </location>
</feature>
<feature type="strand" evidence="6">
    <location>
        <begin position="121"/>
        <end position="130"/>
    </location>
</feature>
<feature type="strand" evidence="6">
    <location>
        <begin position="138"/>
        <end position="142"/>
    </location>
</feature>
<feature type="strand" evidence="6">
    <location>
        <begin position="152"/>
        <end position="155"/>
    </location>
</feature>
<feature type="strand" evidence="6">
    <location>
        <begin position="167"/>
        <end position="174"/>
    </location>
</feature>
<feature type="strand" evidence="6">
    <location>
        <begin position="184"/>
        <end position="195"/>
    </location>
</feature>
<feature type="strand" evidence="6">
    <location>
        <begin position="199"/>
        <end position="202"/>
    </location>
</feature>
<feature type="strand" evidence="6">
    <location>
        <begin position="206"/>
        <end position="213"/>
    </location>
</feature>
<feature type="helix" evidence="6">
    <location>
        <begin position="224"/>
        <end position="226"/>
    </location>
</feature>
<feature type="turn" evidence="6">
    <location>
        <begin position="227"/>
        <end position="229"/>
    </location>
</feature>
<evidence type="ECO:0000250" key="1"/>
<evidence type="ECO:0000269" key="2">
    <source>
    </source>
</evidence>
<evidence type="ECO:0000269" key="3">
    <source>
    </source>
</evidence>
<evidence type="ECO:0000303" key="4">
    <source>
    </source>
</evidence>
<evidence type="ECO:0000305" key="5"/>
<evidence type="ECO:0007829" key="6">
    <source>
        <dbReference type="PDB" id="1MVQ"/>
    </source>
</evidence>
<organism evidence="5">
    <name type="scientific">Cratylia mollis</name>
    <name type="common">Camaratu bean</name>
    <dbReference type="NCBI Taxonomy" id="252530"/>
    <lineage>
        <taxon>Eukaryota</taxon>
        <taxon>Viridiplantae</taxon>
        <taxon>Streptophyta</taxon>
        <taxon>Embryophyta</taxon>
        <taxon>Tracheophyta</taxon>
        <taxon>Spermatophyta</taxon>
        <taxon>Magnoliopsida</taxon>
        <taxon>eudicotyledons</taxon>
        <taxon>Gunneridae</taxon>
        <taxon>Pentapetalae</taxon>
        <taxon>rosids</taxon>
        <taxon>fabids</taxon>
        <taxon>Fabales</taxon>
        <taxon>Fabaceae</taxon>
        <taxon>Papilionoideae</taxon>
        <taxon>50 kb inversion clade</taxon>
        <taxon>NPAAA clade</taxon>
        <taxon>indigoferoid/millettioid clade</taxon>
        <taxon>Phaseoleae</taxon>
        <taxon>Cratylia</taxon>
    </lineage>
</organism>
<dbReference type="PDB" id="1MVQ">
    <property type="method" value="X-ray"/>
    <property type="resolution" value="1.77 A"/>
    <property type="chains" value="A=1-234"/>
</dbReference>
<dbReference type="PDBsum" id="1MVQ"/>
<dbReference type="SMR" id="P83721"/>
<dbReference type="UniLectin" id="P83721"/>
<dbReference type="EvolutionaryTrace" id="P83721"/>
<dbReference type="GO" id="GO:0005536">
    <property type="term" value="F:D-glucose binding"/>
    <property type="evidence" value="ECO:0000314"/>
    <property type="project" value="UniProtKB"/>
</dbReference>
<dbReference type="GO" id="GO:0005537">
    <property type="term" value="F:D-mannose binding"/>
    <property type="evidence" value="ECO:0000314"/>
    <property type="project" value="UniProtKB"/>
</dbReference>
<dbReference type="GO" id="GO:0046872">
    <property type="term" value="F:metal ion binding"/>
    <property type="evidence" value="ECO:0007669"/>
    <property type="project" value="UniProtKB-KW"/>
</dbReference>
<dbReference type="CDD" id="cd06899">
    <property type="entry name" value="lectin_legume_LecRK_Arcelin_ConA"/>
    <property type="match status" value="1"/>
</dbReference>
<dbReference type="FunFam" id="2.60.120.200:FF:000227">
    <property type="entry name" value="Concanavalin-A"/>
    <property type="match status" value="1"/>
</dbReference>
<dbReference type="Gene3D" id="2.60.120.200">
    <property type="match status" value="1"/>
</dbReference>
<dbReference type="InterPro" id="IPR013320">
    <property type="entry name" value="ConA-like_dom_sf"/>
</dbReference>
<dbReference type="InterPro" id="IPR000985">
    <property type="entry name" value="Lectin_LegA_CS"/>
</dbReference>
<dbReference type="InterPro" id="IPR019825">
    <property type="entry name" value="Lectin_legB_Mn/Ca_BS"/>
</dbReference>
<dbReference type="InterPro" id="IPR001220">
    <property type="entry name" value="Legume_lectin_dom"/>
</dbReference>
<dbReference type="InterPro" id="IPR050258">
    <property type="entry name" value="Leguminous_Lectin"/>
</dbReference>
<dbReference type="PANTHER" id="PTHR32401">
    <property type="entry name" value="CONCANAVALIN A-LIKE LECTIN FAMILY PROTEIN"/>
    <property type="match status" value="1"/>
</dbReference>
<dbReference type="PANTHER" id="PTHR32401:SF47">
    <property type="entry name" value="LEGUME LECTIN DOMAIN-CONTAINING PROTEIN"/>
    <property type="match status" value="1"/>
</dbReference>
<dbReference type="Pfam" id="PF00139">
    <property type="entry name" value="Lectin_legB"/>
    <property type="match status" value="2"/>
</dbReference>
<dbReference type="SUPFAM" id="SSF49899">
    <property type="entry name" value="Concanavalin A-like lectins/glucanases"/>
    <property type="match status" value="1"/>
</dbReference>
<dbReference type="PROSITE" id="PS00308">
    <property type="entry name" value="LECTIN_LEGUME_ALPHA"/>
    <property type="match status" value="1"/>
</dbReference>
<dbReference type="PROSITE" id="PS00307">
    <property type="entry name" value="LECTIN_LEGUME_BETA"/>
    <property type="match status" value="1"/>
</dbReference>
<accession>P83721</accession>